<protein>
    <recommendedName>
        <fullName evidence="2">Large ribosomal subunit protein eL42</fullName>
    </recommendedName>
    <alternativeName>
        <fullName>60S ribosomal protein L41</fullName>
    </alternativeName>
    <alternativeName>
        <fullName>60S ribosomal protein L44</fullName>
    </alternativeName>
</protein>
<evidence type="ECO:0000250" key="1"/>
<evidence type="ECO:0000305" key="2"/>
<sequence length="106" mass="12168">MVNVPKTRRTYCKGKDCRKHTQHKVTQYKAGKASLFAQGKRRYDRKQSGFGGQTKPVFHKKAKTTKKVVLRLECVVCKTKAQLSLKRCKHFELGGDKKQKGQALQF</sequence>
<dbReference type="EMBL" id="CH408155">
    <property type="status" value="NOT_ANNOTATED_CDS"/>
    <property type="molecule type" value="Genomic_DNA"/>
</dbReference>
<dbReference type="EMBL" id="M62395">
    <property type="protein sequence ID" value="AAA35356.1"/>
    <property type="molecule type" value="Genomic_DNA"/>
</dbReference>
<dbReference type="EMBL" id="D10153">
    <property type="protein sequence ID" value="BAA01017.1"/>
    <property type="molecule type" value="Genomic_DNA"/>
</dbReference>
<dbReference type="SMR" id="P31866"/>
<dbReference type="FunCoup" id="P31866">
    <property type="interactions" value="676"/>
</dbReference>
<dbReference type="STRING" id="294746.P31866"/>
<dbReference type="InParanoid" id="P31866"/>
<dbReference type="Proteomes" id="UP000001997">
    <property type="component" value="Unassembled WGS sequence"/>
</dbReference>
<dbReference type="GO" id="GO:1990904">
    <property type="term" value="C:ribonucleoprotein complex"/>
    <property type="evidence" value="ECO:0007669"/>
    <property type="project" value="UniProtKB-KW"/>
</dbReference>
<dbReference type="GO" id="GO:0005840">
    <property type="term" value="C:ribosome"/>
    <property type="evidence" value="ECO:0007669"/>
    <property type="project" value="UniProtKB-KW"/>
</dbReference>
<dbReference type="GO" id="GO:0003735">
    <property type="term" value="F:structural constituent of ribosome"/>
    <property type="evidence" value="ECO:0007669"/>
    <property type="project" value="InterPro"/>
</dbReference>
<dbReference type="GO" id="GO:0046677">
    <property type="term" value="P:response to antibiotic"/>
    <property type="evidence" value="ECO:0007669"/>
    <property type="project" value="UniProtKB-KW"/>
</dbReference>
<dbReference type="GO" id="GO:0046898">
    <property type="term" value="P:response to cycloheximide"/>
    <property type="evidence" value="ECO:0007669"/>
    <property type="project" value="UniProtKB-KW"/>
</dbReference>
<dbReference type="GO" id="GO:0006412">
    <property type="term" value="P:translation"/>
    <property type="evidence" value="ECO:0007669"/>
    <property type="project" value="InterPro"/>
</dbReference>
<dbReference type="FunFam" id="3.10.450.80:FF:000001">
    <property type="entry name" value="60S ribosomal protein L44"/>
    <property type="match status" value="1"/>
</dbReference>
<dbReference type="Gene3D" id="3.10.450.80">
    <property type="match status" value="1"/>
</dbReference>
<dbReference type="InterPro" id="IPR000552">
    <property type="entry name" value="Ribosomal_eL44"/>
</dbReference>
<dbReference type="InterPro" id="IPR053708">
    <property type="entry name" value="Ribosomal_LSU_eL42"/>
</dbReference>
<dbReference type="InterPro" id="IPR011332">
    <property type="entry name" value="Ribosomal_zn-bd"/>
</dbReference>
<dbReference type="PANTHER" id="PTHR10369">
    <property type="entry name" value="60S RIBOSOMAL PROTEIN L36A/L44"/>
    <property type="match status" value="1"/>
</dbReference>
<dbReference type="Pfam" id="PF00935">
    <property type="entry name" value="Ribosomal_L44"/>
    <property type="match status" value="1"/>
</dbReference>
<dbReference type="SUPFAM" id="SSF57829">
    <property type="entry name" value="Zn-binding ribosomal proteins"/>
    <property type="match status" value="1"/>
</dbReference>
<dbReference type="PROSITE" id="PS01172">
    <property type="entry name" value="RIBOSOMAL_L44E"/>
    <property type="match status" value="1"/>
</dbReference>
<organism>
    <name type="scientific">Meyerozyma guilliermondii (strain ATCC 6260 / CBS 566 / DSM 6381 / JCM 1539 / NBRC 10279 / NRRL Y-324)</name>
    <name type="common">Yeast</name>
    <name type="synonym">Candida guilliermondii</name>
    <dbReference type="NCBI Taxonomy" id="294746"/>
    <lineage>
        <taxon>Eukaryota</taxon>
        <taxon>Fungi</taxon>
        <taxon>Dikarya</taxon>
        <taxon>Ascomycota</taxon>
        <taxon>Saccharomycotina</taxon>
        <taxon>Pichiomycetes</taxon>
        <taxon>Debaryomycetaceae</taxon>
        <taxon>Meyerozyma</taxon>
    </lineage>
</organism>
<comment type="miscellaneous">
    <text>Confers resistance to cycloheximide, an inhibitor of polypeptide elongation.</text>
</comment>
<comment type="similarity">
    <text evidence="2">Belongs to the eukaryotic ribosomal protein eL42 family.</text>
</comment>
<keyword id="KW-0046">Antibiotic resistance</keyword>
<keyword id="KW-0196">Cycloheximide resistance</keyword>
<keyword id="KW-1185">Reference proteome</keyword>
<keyword id="KW-0687">Ribonucleoprotein</keyword>
<keyword id="KW-0689">Ribosomal protein</keyword>
<reference key="1">
    <citation type="journal article" date="2009" name="Nature">
        <title>Evolution of pathogenicity and sexual reproduction in eight Candida genomes.</title>
        <authorList>
            <person name="Butler G."/>
            <person name="Rasmussen M.D."/>
            <person name="Lin M.F."/>
            <person name="Santos M.A.S."/>
            <person name="Sakthikumar S."/>
            <person name="Munro C.A."/>
            <person name="Rheinbay E."/>
            <person name="Grabherr M."/>
            <person name="Forche A."/>
            <person name="Reedy J.L."/>
            <person name="Agrafioti I."/>
            <person name="Arnaud M.B."/>
            <person name="Bates S."/>
            <person name="Brown A.J.P."/>
            <person name="Brunke S."/>
            <person name="Costanzo M.C."/>
            <person name="Fitzpatrick D.A."/>
            <person name="de Groot P.W.J."/>
            <person name="Harris D."/>
            <person name="Hoyer L.L."/>
            <person name="Hube B."/>
            <person name="Klis F.M."/>
            <person name="Kodira C."/>
            <person name="Lennard N."/>
            <person name="Logue M.E."/>
            <person name="Martin R."/>
            <person name="Neiman A.M."/>
            <person name="Nikolaou E."/>
            <person name="Quail M.A."/>
            <person name="Quinn J."/>
            <person name="Santos M.C."/>
            <person name="Schmitzberger F.F."/>
            <person name="Sherlock G."/>
            <person name="Shah P."/>
            <person name="Silverstein K.A.T."/>
            <person name="Skrzypek M.S."/>
            <person name="Soll D."/>
            <person name="Staggs R."/>
            <person name="Stansfield I."/>
            <person name="Stumpf M.P.H."/>
            <person name="Sudbery P.E."/>
            <person name="Srikantha T."/>
            <person name="Zeng Q."/>
            <person name="Berman J."/>
            <person name="Berriman M."/>
            <person name="Heitman J."/>
            <person name="Gow N.A.R."/>
            <person name="Lorenz M.C."/>
            <person name="Birren B.W."/>
            <person name="Kellis M."/>
            <person name="Cuomo C.A."/>
        </authorList>
    </citation>
    <scope>NUCLEOTIDE SEQUENCE [LARGE SCALE GENOMIC DNA]</scope>
    <source>
        <strain>ATCC 6260 / CBS 566 / DSM 6381 / JCM 1539 / NBRC 10279 / NRRL Y-324</strain>
    </source>
</reference>
<reference key="2">
    <citation type="journal article" date="1992" name="J. Bacteriol.">
        <title>Drastic alteration of cycloheximide sensitivity by substitution of one amino acid in the L41 ribosomal protein of yeasts.</title>
        <authorList>
            <person name="Kawai S."/>
            <person name="Murao S."/>
            <person name="Mochizuki M."/>
            <person name="Shibuya I."/>
            <person name="Yano K."/>
            <person name="Takagi M."/>
        </authorList>
    </citation>
    <scope>NUCLEOTIDE SEQUENCE [GENOMIC DNA] OF 1-103</scope>
    <source>
        <strain>IFO 0556</strain>
    </source>
</reference>
<gene>
    <name type="primary">RPL44</name>
</gene>
<proteinExistence type="inferred from homology"/>
<accession>P31866</accession>
<name>RL44_PICGU</name>
<feature type="initiator methionine" description="Removed" evidence="1">
    <location>
        <position position="1"/>
    </location>
</feature>
<feature type="chain" id="PRO_0000149143" description="Large ribosomal subunit protein eL42">
    <location>
        <begin position="2"/>
        <end position="106"/>
    </location>
</feature>